<proteinExistence type="inferred from homology"/>
<accession>Q2JU40</accession>
<protein>
    <recommendedName>
        <fullName evidence="1">Endoribonuclease YbeY</fullName>
        <ecNumber evidence="1">3.1.-.-</ecNumber>
    </recommendedName>
</protein>
<gene>
    <name evidence="1" type="primary">ybeY</name>
    <name type="ordered locus">CYA_1624</name>
</gene>
<dbReference type="EC" id="3.1.-.-" evidence="1"/>
<dbReference type="EMBL" id="CP000239">
    <property type="protein sequence ID" value="ABC99784.1"/>
    <property type="status" value="ALT_INIT"/>
    <property type="molecule type" value="Genomic_DNA"/>
</dbReference>
<dbReference type="RefSeq" id="WP_041438372.1">
    <property type="nucleotide sequence ID" value="NC_007775.1"/>
</dbReference>
<dbReference type="SMR" id="Q2JU40"/>
<dbReference type="STRING" id="321327.CYA_1624"/>
<dbReference type="KEGG" id="cya:CYA_1624"/>
<dbReference type="eggNOG" id="COG0319">
    <property type="taxonomic scope" value="Bacteria"/>
</dbReference>
<dbReference type="HOGENOM" id="CLU_106710_3_1_3"/>
<dbReference type="OrthoDB" id="9807740at2"/>
<dbReference type="Proteomes" id="UP000008818">
    <property type="component" value="Chromosome"/>
</dbReference>
<dbReference type="GO" id="GO:0005737">
    <property type="term" value="C:cytoplasm"/>
    <property type="evidence" value="ECO:0007669"/>
    <property type="project" value="UniProtKB-SubCell"/>
</dbReference>
<dbReference type="GO" id="GO:0004222">
    <property type="term" value="F:metalloendopeptidase activity"/>
    <property type="evidence" value="ECO:0007669"/>
    <property type="project" value="InterPro"/>
</dbReference>
<dbReference type="GO" id="GO:0004521">
    <property type="term" value="F:RNA endonuclease activity"/>
    <property type="evidence" value="ECO:0007669"/>
    <property type="project" value="UniProtKB-UniRule"/>
</dbReference>
<dbReference type="GO" id="GO:0008270">
    <property type="term" value="F:zinc ion binding"/>
    <property type="evidence" value="ECO:0007669"/>
    <property type="project" value="UniProtKB-UniRule"/>
</dbReference>
<dbReference type="GO" id="GO:0006364">
    <property type="term" value="P:rRNA processing"/>
    <property type="evidence" value="ECO:0007669"/>
    <property type="project" value="UniProtKB-UniRule"/>
</dbReference>
<dbReference type="Gene3D" id="3.40.390.30">
    <property type="entry name" value="Metalloproteases ('zincins'), catalytic domain"/>
    <property type="match status" value="1"/>
</dbReference>
<dbReference type="HAMAP" id="MF_00009">
    <property type="entry name" value="Endoribonucl_YbeY"/>
    <property type="match status" value="1"/>
</dbReference>
<dbReference type="InterPro" id="IPR023091">
    <property type="entry name" value="MetalPrtase_cat_dom_sf_prd"/>
</dbReference>
<dbReference type="InterPro" id="IPR002036">
    <property type="entry name" value="YbeY"/>
</dbReference>
<dbReference type="InterPro" id="IPR020549">
    <property type="entry name" value="YbeY_CS"/>
</dbReference>
<dbReference type="NCBIfam" id="TIGR00043">
    <property type="entry name" value="rRNA maturation RNase YbeY"/>
    <property type="match status" value="1"/>
</dbReference>
<dbReference type="PANTHER" id="PTHR46986">
    <property type="entry name" value="ENDORIBONUCLEASE YBEY, CHLOROPLASTIC"/>
    <property type="match status" value="1"/>
</dbReference>
<dbReference type="PANTHER" id="PTHR46986:SF1">
    <property type="entry name" value="ENDORIBONUCLEASE YBEY, CHLOROPLASTIC"/>
    <property type="match status" value="1"/>
</dbReference>
<dbReference type="Pfam" id="PF02130">
    <property type="entry name" value="YbeY"/>
    <property type="match status" value="1"/>
</dbReference>
<dbReference type="SUPFAM" id="SSF55486">
    <property type="entry name" value="Metalloproteases ('zincins'), catalytic domain"/>
    <property type="match status" value="1"/>
</dbReference>
<dbReference type="PROSITE" id="PS01306">
    <property type="entry name" value="UPF0054"/>
    <property type="match status" value="1"/>
</dbReference>
<evidence type="ECO:0000255" key="1">
    <source>
        <dbReference type="HAMAP-Rule" id="MF_00009"/>
    </source>
</evidence>
<evidence type="ECO:0000305" key="2"/>
<feature type="chain" id="PRO_0000284336" description="Endoribonuclease YbeY">
    <location>
        <begin position="1"/>
        <end position="163"/>
    </location>
</feature>
<feature type="binding site" evidence="1">
    <location>
        <position position="121"/>
    </location>
    <ligand>
        <name>Zn(2+)</name>
        <dbReference type="ChEBI" id="CHEBI:29105"/>
        <note>catalytic</note>
    </ligand>
</feature>
<feature type="binding site" evidence="1">
    <location>
        <position position="125"/>
    </location>
    <ligand>
        <name>Zn(2+)</name>
        <dbReference type="ChEBI" id="CHEBI:29105"/>
        <note>catalytic</note>
    </ligand>
</feature>
<feature type="binding site" evidence="1">
    <location>
        <position position="131"/>
    </location>
    <ligand>
        <name>Zn(2+)</name>
        <dbReference type="ChEBI" id="CHEBI:29105"/>
        <note>catalytic</note>
    </ligand>
</feature>
<name>YBEY_SYNJA</name>
<sequence length="163" mass="18526">MEGFLDLYLELNVPSPVEEATWHRWFEVWLRELGVTDPCELSLCLTSDEHIRQLNREFRHIDAPTDVLAFAAEETSTPVELQKITGVRLLGDIVISVPTACAQAKAQGQRLSRELAWLASHGLLHLLGWDHPDELSLQRMLQQQHHLLAAIQEDLEVTHGQQP</sequence>
<comment type="function">
    <text evidence="1">Single strand-specific metallo-endoribonuclease involved in late-stage 70S ribosome quality control and in maturation of the 3' terminus of the 16S rRNA.</text>
</comment>
<comment type="cofactor">
    <cofactor evidence="1">
        <name>Zn(2+)</name>
        <dbReference type="ChEBI" id="CHEBI:29105"/>
    </cofactor>
    <text evidence="1">Binds 1 zinc ion.</text>
</comment>
<comment type="subcellular location">
    <subcellularLocation>
        <location evidence="1">Cytoplasm</location>
    </subcellularLocation>
</comment>
<comment type="similarity">
    <text evidence="1">Belongs to the endoribonuclease YbeY family.</text>
</comment>
<comment type="sequence caution" evidence="2">
    <conflict type="erroneous initiation">
        <sequence resource="EMBL-CDS" id="ABC99784"/>
    </conflict>
</comment>
<reference key="1">
    <citation type="journal article" date="2007" name="ISME J.">
        <title>Population level functional diversity in a microbial community revealed by comparative genomic and metagenomic analyses.</title>
        <authorList>
            <person name="Bhaya D."/>
            <person name="Grossman A.R."/>
            <person name="Steunou A.-S."/>
            <person name="Khuri N."/>
            <person name="Cohan F.M."/>
            <person name="Hamamura N."/>
            <person name="Melendrez M.C."/>
            <person name="Bateson M.M."/>
            <person name="Ward D.M."/>
            <person name="Heidelberg J.F."/>
        </authorList>
    </citation>
    <scope>NUCLEOTIDE SEQUENCE [LARGE SCALE GENOMIC DNA]</scope>
    <source>
        <strain>JA-3-3Ab</strain>
    </source>
</reference>
<keyword id="KW-0963">Cytoplasm</keyword>
<keyword id="KW-0255">Endonuclease</keyword>
<keyword id="KW-0378">Hydrolase</keyword>
<keyword id="KW-0479">Metal-binding</keyword>
<keyword id="KW-0540">Nuclease</keyword>
<keyword id="KW-0690">Ribosome biogenesis</keyword>
<keyword id="KW-0698">rRNA processing</keyword>
<keyword id="KW-0862">Zinc</keyword>
<organism>
    <name type="scientific">Synechococcus sp. (strain JA-3-3Ab)</name>
    <name type="common">Cyanobacteria bacterium Yellowstone A-Prime</name>
    <dbReference type="NCBI Taxonomy" id="321327"/>
    <lineage>
        <taxon>Bacteria</taxon>
        <taxon>Bacillati</taxon>
        <taxon>Cyanobacteriota</taxon>
        <taxon>Cyanophyceae</taxon>
        <taxon>Synechococcales</taxon>
        <taxon>Synechococcaceae</taxon>
        <taxon>Synechococcus</taxon>
    </lineage>
</organism>